<name>Y1058_VIBCH</name>
<gene>
    <name type="ordered locus">VC_1058</name>
</gene>
<dbReference type="EMBL" id="AE003852">
    <property type="protein sequence ID" value="AAF94217.1"/>
    <property type="molecule type" value="Genomic_DNA"/>
</dbReference>
<dbReference type="PIR" id="D82247">
    <property type="entry name" value="D82247"/>
</dbReference>
<dbReference type="RefSeq" id="NP_230703.1">
    <property type="nucleotide sequence ID" value="NC_002505.1"/>
</dbReference>
<dbReference type="RefSeq" id="WP_001880862.1">
    <property type="nucleotide sequence ID" value="NZ_LT906614.1"/>
</dbReference>
<dbReference type="STRING" id="243277.VC_1058"/>
<dbReference type="DNASU" id="2614328"/>
<dbReference type="EnsemblBacteria" id="AAF94217">
    <property type="protein sequence ID" value="AAF94217"/>
    <property type="gene ID" value="VC_1058"/>
</dbReference>
<dbReference type="KEGG" id="vch:VC_1058"/>
<dbReference type="PATRIC" id="fig|243277.26.peg.1010"/>
<dbReference type="eggNOG" id="COG2983">
    <property type="taxonomic scope" value="Bacteria"/>
</dbReference>
<dbReference type="HOGENOM" id="CLU_109769_0_1_6"/>
<dbReference type="Proteomes" id="UP000000584">
    <property type="component" value="Chromosome 1"/>
</dbReference>
<dbReference type="HAMAP" id="MF_00676">
    <property type="entry name" value="UPF0260"/>
    <property type="match status" value="1"/>
</dbReference>
<dbReference type="InterPro" id="IPR005358">
    <property type="entry name" value="Puta_zinc/iron-chelating_dom"/>
</dbReference>
<dbReference type="InterPro" id="IPR008228">
    <property type="entry name" value="UCP006173"/>
</dbReference>
<dbReference type="NCBIfam" id="NF003501">
    <property type="entry name" value="PRK05170.1-5"/>
    <property type="match status" value="1"/>
</dbReference>
<dbReference type="NCBIfam" id="NF003503">
    <property type="entry name" value="PRK05170.2-1"/>
    <property type="match status" value="1"/>
</dbReference>
<dbReference type="NCBIfam" id="NF003507">
    <property type="entry name" value="PRK05170.2-5"/>
    <property type="match status" value="1"/>
</dbReference>
<dbReference type="PANTHER" id="PTHR37421">
    <property type="entry name" value="UPF0260 PROTEIN YCGN"/>
    <property type="match status" value="1"/>
</dbReference>
<dbReference type="PANTHER" id="PTHR37421:SF1">
    <property type="entry name" value="UPF0260 PROTEIN YCGN"/>
    <property type="match status" value="1"/>
</dbReference>
<dbReference type="Pfam" id="PF03692">
    <property type="entry name" value="CxxCxxCC"/>
    <property type="match status" value="1"/>
</dbReference>
<dbReference type="PIRSF" id="PIRSF006173">
    <property type="entry name" value="UCP006173"/>
    <property type="match status" value="1"/>
</dbReference>
<reference key="1">
    <citation type="journal article" date="2000" name="Nature">
        <title>DNA sequence of both chromosomes of the cholera pathogen Vibrio cholerae.</title>
        <authorList>
            <person name="Heidelberg J.F."/>
            <person name="Eisen J.A."/>
            <person name="Nelson W.C."/>
            <person name="Clayton R.A."/>
            <person name="Gwinn M.L."/>
            <person name="Dodson R.J."/>
            <person name="Haft D.H."/>
            <person name="Hickey E.K."/>
            <person name="Peterson J.D."/>
            <person name="Umayam L.A."/>
            <person name="Gill S.R."/>
            <person name="Nelson K.E."/>
            <person name="Read T.D."/>
            <person name="Tettelin H."/>
            <person name="Richardson D.L."/>
            <person name="Ermolaeva M.D."/>
            <person name="Vamathevan J.J."/>
            <person name="Bass S."/>
            <person name="Qin H."/>
            <person name="Dragoi I."/>
            <person name="Sellers P."/>
            <person name="McDonald L.A."/>
            <person name="Utterback T.R."/>
            <person name="Fleischmann R.D."/>
            <person name="Nierman W.C."/>
            <person name="White O."/>
            <person name="Salzberg S.L."/>
            <person name="Smith H.O."/>
            <person name="Colwell R.R."/>
            <person name="Mekalanos J.J."/>
            <person name="Venter J.C."/>
            <person name="Fraser C.M."/>
        </authorList>
    </citation>
    <scope>NUCLEOTIDE SEQUENCE [LARGE SCALE GENOMIC DNA]</scope>
    <source>
        <strain>ATCC 39315 / El Tor Inaba N16961</strain>
    </source>
</reference>
<feature type="chain" id="PRO_0000214595" description="UPF0260 protein VC_1058">
    <location>
        <begin position="1"/>
        <end position="145"/>
    </location>
</feature>
<protein>
    <recommendedName>
        <fullName evidence="1">UPF0260 protein VC_1058</fullName>
    </recommendedName>
</protein>
<accession>Q9KT47</accession>
<comment type="similarity">
    <text evidence="1">Belongs to the UPF0260 family.</text>
</comment>
<proteinExistence type="inferred from homology"/>
<sequence>MSTPFWQSKTLDQMTEAEWESLCDGCGKCCLHKLMDEDTDEIYYTNVACSWLNSDTCSCKDYPNRFSSGEECLKLTRDKIEEFNWLPDTCAYRLLGNGQTLPEWHPLLTGSKDAMHAADESVRGKIVYEVDVIDWEDHIVLMSRD</sequence>
<keyword id="KW-1185">Reference proteome</keyword>
<organism>
    <name type="scientific">Vibrio cholerae serotype O1 (strain ATCC 39315 / El Tor Inaba N16961)</name>
    <dbReference type="NCBI Taxonomy" id="243277"/>
    <lineage>
        <taxon>Bacteria</taxon>
        <taxon>Pseudomonadati</taxon>
        <taxon>Pseudomonadota</taxon>
        <taxon>Gammaproteobacteria</taxon>
        <taxon>Vibrionales</taxon>
        <taxon>Vibrionaceae</taxon>
        <taxon>Vibrio</taxon>
    </lineage>
</organism>
<evidence type="ECO:0000255" key="1">
    <source>
        <dbReference type="HAMAP-Rule" id="MF_00676"/>
    </source>
</evidence>